<organism>
    <name type="scientific">Spinacia oleracea</name>
    <name type="common">Spinach</name>
    <dbReference type="NCBI Taxonomy" id="3562"/>
    <lineage>
        <taxon>Eukaryota</taxon>
        <taxon>Viridiplantae</taxon>
        <taxon>Streptophyta</taxon>
        <taxon>Embryophyta</taxon>
        <taxon>Tracheophyta</taxon>
        <taxon>Spermatophyta</taxon>
        <taxon>Magnoliopsida</taxon>
        <taxon>eudicotyledons</taxon>
        <taxon>Gunneridae</taxon>
        <taxon>Pentapetalae</taxon>
        <taxon>Caryophyllales</taxon>
        <taxon>Chenopodiaceae</taxon>
        <taxon>Chenopodioideae</taxon>
        <taxon>Anserineae</taxon>
        <taxon>Spinacia</taxon>
    </lineage>
</organism>
<protein>
    <recommendedName>
        <fullName>Ferredoxin-1, chloroplastic</fullName>
    </recommendedName>
    <alternativeName>
        <fullName>Ferredoxin I</fullName>
        <shortName>Fd I</shortName>
    </alternativeName>
</protein>
<dbReference type="EMBL" id="M35660">
    <property type="protein sequence ID" value="AAA34028.1"/>
    <property type="molecule type" value="mRNA"/>
</dbReference>
<dbReference type="PIR" id="S00437">
    <property type="entry name" value="FESP1"/>
</dbReference>
<dbReference type="PDB" id="1A70">
    <property type="method" value="X-ray"/>
    <property type="resolution" value="1.70 A"/>
    <property type="chains" value="A=51-147"/>
</dbReference>
<dbReference type="PDBsum" id="1A70"/>
<dbReference type="SMR" id="P00221"/>
<dbReference type="IntAct" id="P00221">
    <property type="interactions" value="4"/>
</dbReference>
<dbReference type="OrthoDB" id="1885901at2759"/>
<dbReference type="SABIO-RK" id="P00221"/>
<dbReference type="EvolutionaryTrace" id="P00221"/>
<dbReference type="Proteomes" id="UP001155700">
    <property type="component" value="Unplaced"/>
</dbReference>
<dbReference type="GO" id="GO:0009570">
    <property type="term" value="C:chloroplast stroma"/>
    <property type="evidence" value="ECO:0000318"/>
    <property type="project" value="GO_Central"/>
</dbReference>
<dbReference type="GO" id="GO:0051537">
    <property type="term" value="F:2 iron, 2 sulfur cluster binding"/>
    <property type="evidence" value="ECO:0007669"/>
    <property type="project" value="UniProtKB-KW"/>
</dbReference>
<dbReference type="GO" id="GO:0009055">
    <property type="term" value="F:electron transfer activity"/>
    <property type="evidence" value="ECO:0007669"/>
    <property type="project" value="InterPro"/>
</dbReference>
<dbReference type="GO" id="GO:0046872">
    <property type="term" value="F:metal ion binding"/>
    <property type="evidence" value="ECO:0007669"/>
    <property type="project" value="UniProtKB-KW"/>
</dbReference>
<dbReference type="GO" id="GO:0022900">
    <property type="term" value="P:electron transport chain"/>
    <property type="evidence" value="ECO:0007669"/>
    <property type="project" value="InterPro"/>
</dbReference>
<dbReference type="CDD" id="cd00207">
    <property type="entry name" value="fer2"/>
    <property type="match status" value="1"/>
</dbReference>
<dbReference type="FunFam" id="3.10.20.30:FF:000014">
    <property type="entry name" value="Ferredoxin"/>
    <property type="match status" value="1"/>
</dbReference>
<dbReference type="Gene3D" id="3.10.20.30">
    <property type="match status" value="1"/>
</dbReference>
<dbReference type="InterPro" id="IPR036010">
    <property type="entry name" value="2Fe-2S_ferredoxin-like_sf"/>
</dbReference>
<dbReference type="InterPro" id="IPR001041">
    <property type="entry name" value="2Fe-2S_ferredoxin-type"/>
</dbReference>
<dbReference type="InterPro" id="IPR006058">
    <property type="entry name" value="2Fe2S_fd_BS"/>
</dbReference>
<dbReference type="InterPro" id="IPR012675">
    <property type="entry name" value="Beta-grasp_dom_sf"/>
</dbReference>
<dbReference type="InterPro" id="IPR010241">
    <property type="entry name" value="Fd_pln"/>
</dbReference>
<dbReference type="NCBIfam" id="TIGR02008">
    <property type="entry name" value="fdx_plant"/>
    <property type="match status" value="1"/>
</dbReference>
<dbReference type="PANTHER" id="PTHR43112">
    <property type="entry name" value="FERREDOXIN"/>
    <property type="match status" value="1"/>
</dbReference>
<dbReference type="PANTHER" id="PTHR43112:SF3">
    <property type="entry name" value="FERREDOXIN-2, CHLOROPLASTIC"/>
    <property type="match status" value="1"/>
</dbReference>
<dbReference type="Pfam" id="PF00111">
    <property type="entry name" value="Fer2"/>
    <property type="match status" value="1"/>
</dbReference>
<dbReference type="SUPFAM" id="SSF54292">
    <property type="entry name" value="2Fe-2S ferredoxin-like"/>
    <property type="match status" value="1"/>
</dbReference>
<dbReference type="PROSITE" id="PS00197">
    <property type="entry name" value="2FE2S_FER_1"/>
    <property type="match status" value="1"/>
</dbReference>
<dbReference type="PROSITE" id="PS51085">
    <property type="entry name" value="2FE2S_FER_2"/>
    <property type="match status" value="1"/>
</dbReference>
<gene>
    <name type="primary">PETF</name>
</gene>
<accession>P00221</accession>
<comment type="function">
    <text>Ferredoxins are iron-sulfur proteins that transfer electrons in a wide variety of metabolic reactions.</text>
</comment>
<comment type="cofactor">
    <cofactor>
        <name>[2Fe-2S] cluster</name>
        <dbReference type="ChEBI" id="CHEBI:190135"/>
    </cofactor>
    <text>Binds 1 [2Fe-2S] cluster.</text>
</comment>
<comment type="subunit">
    <text evidence="1">Forms a complex with heterodimeric ferredoxin-thioredoxin reductase (FTR) and thioredoxin.</text>
</comment>
<comment type="interaction">
    <interactant intactId="EBI-864933">
        <id>P00221</id>
    </interactant>
    <interactant intactId="EBI-865079">
        <id>P00455</id>
        <label>PETH</label>
    </interactant>
    <organismsDiffer>false</organismsDiffer>
    <experiments>3</experiments>
</comment>
<comment type="interaction">
    <interactant intactId="EBI-864933">
        <id>P00221</id>
    </interactant>
    <interactant intactId="EBI-864919">
        <id>P12353</id>
        <label>psaD</label>
    </interactant>
    <organismsDiffer>false</organismsDiffer>
    <experiments>2</experiments>
</comment>
<comment type="interaction">
    <interactant intactId="EBI-864933">
        <id>P00221</id>
    </interactant>
    <interactant intactId="EBI-932578">
        <id>P39458</id>
        <label>narB</label>
    </interactant>
    <organismsDiffer>true</organismsDiffer>
    <experiments>2</experiments>
</comment>
<comment type="subcellular location">
    <subcellularLocation>
        <location>Plastid</location>
        <location>Chloroplast</location>
    </subcellularLocation>
</comment>
<comment type="miscellaneous">
    <text>There may be variants with Lys-81 and Met-83 and a possible deletion of Lys-141.</text>
</comment>
<comment type="similarity">
    <text evidence="4">Belongs to the 2Fe2S plant-type ferredoxin family.</text>
</comment>
<feature type="transit peptide" description="Chloroplast" evidence="3">
    <location>
        <begin position="1"/>
        <end position="50"/>
    </location>
</feature>
<feature type="chain" id="PRO_0000008839" description="Ferredoxin-1, chloroplastic">
    <location>
        <begin position="51"/>
        <end position="147"/>
    </location>
</feature>
<feature type="domain" description="2Fe-2S ferredoxin-type" evidence="2">
    <location>
        <begin position="53"/>
        <end position="143"/>
    </location>
</feature>
<feature type="binding site">
    <location>
        <position position="89"/>
    </location>
    <ligand>
        <name>[2Fe-2S] cluster</name>
        <dbReference type="ChEBI" id="CHEBI:190135"/>
    </ligand>
</feature>
<feature type="binding site">
    <location>
        <position position="94"/>
    </location>
    <ligand>
        <name>[2Fe-2S] cluster</name>
        <dbReference type="ChEBI" id="CHEBI:190135"/>
    </ligand>
</feature>
<feature type="binding site">
    <location>
        <position position="97"/>
    </location>
    <ligand>
        <name>[2Fe-2S] cluster</name>
        <dbReference type="ChEBI" id="CHEBI:190135"/>
    </ligand>
</feature>
<feature type="binding site">
    <location>
        <position position="127"/>
    </location>
    <ligand>
        <name>[2Fe-2S] cluster</name>
        <dbReference type="ChEBI" id="CHEBI:190135"/>
    </ligand>
</feature>
<feature type="strand" evidence="5">
    <location>
        <begin position="52"/>
        <end position="59"/>
    </location>
</feature>
<feature type="strand" evidence="5">
    <location>
        <begin position="62"/>
        <end position="69"/>
    </location>
</feature>
<feature type="helix" evidence="5">
    <location>
        <begin position="74"/>
        <end position="80"/>
    </location>
</feature>
<feature type="strand" evidence="5">
    <location>
        <begin position="88"/>
        <end position="92"/>
    </location>
</feature>
<feature type="strand" evidence="5">
    <location>
        <begin position="98"/>
        <end position="104"/>
    </location>
</feature>
<feature type="helix" evidence="5">
    <location>
        <begin position="116"/>
        <end position="121"/>
    </location>
</feature>
<feature type="strand" evidence="5">
    <location>
        <begin position="123"/>
        <end position="125"/>
    </location>
</feature>
<feature type="helix" evidence="5">
    <location>
        <begin position="126"/>
        <end position="128"/>
    </location>
</feature>
<feature type="strand" evidence="5">
    <location>
        <begin position="130"/>
        <end position="133"/>
    </location>
</feature>
<feature type="strand" evidence="5">
    <location>
        <begin position="135"/>
        <end position="138"/>
    </location>
</feature>
<feature type="helix" evidence="5">
    <location>
        <begin position="142"/>
        <end position="144"/>
    </location>
</feature>
<reference key="1">
    <citation type="journal article" date="1988" name="Bot. Acta">
        <title>Analysis of cDNA clones encoding the entire ferredoxin I precursor polypeptide from spinach.</title>
        <authorList>
            <person name="Wedel N."/>
            <person name="Bartling D."/>
            <person name="Herrmann R.G."/>
        </authorList>
    </citation>
    <scope>NUCLEOTIDE SEQUENCE [MRNA]</scope>
</reference>
<reference key="2">
    <citation type="journal article" date="1968" name="J. Biol. Chem.">
        <title>Spinach ferredoxin. II. Typtic, chymotryptic, and thermolytic peptides, and complete amino acid sequence.</title>
        <authorList>
            <person name="Matsubara H."/>
            <person name="Sasaki R.M."/>
        </authorList>
    </citation>
    <scope>PROTEIN SEQUENCE OF 51-147</scope>
</reference>
<reference key="3">
    <citation type="journal article" date="1998" name="Acta Crystallogr. D">
        <title>Structure of the mutant E92K of [2Fe-2S] ferredoxin I from Spinacia oleracea at 1.7-A resolution.</title>
        <authorList>
            <person name="Binda C."/>
            <person name="Coda A."/>
            <person name="Aliverti A."/>
            <person name="Zanetti G."/>
            <person name="Mattevi A."/>
        </authorList>
    </citation>
    <scope>X-RAY CRYSTALLOGRAPHY (1.7 ANGSTROMS) OF MUTANT LYS-142</scope>
</reference>
<proteinExistence type="evidence at protein level"/>
<sequence>MAATTTTMMGMATTFVPKPQAPPMMAALPSNTGRSLFGLKTGSRGGRMTMAAYKVTLVTPTGNVEFQCPDDVYILDAAEEEGIDLPYSCRAGSCSSCAGKLKTGSLNQDDQSFLDDDQIDEGWVLTCAAYPVSDVTIETHKEEELTA</sequence>
<name>FER1_SPIOL</name>
<keyword id="KW-0001">2Fe-2S</keyword>
<keyword id="KW-0002">3D-structure</keyword>
<keyword id="KW-0150">Chloroplast</keyword>
<keyword id="KW-0903">Direct protein sequencing</keyword>
<keyword id="KW-0249">Electron transport</keyword>
<keyword id="KW-0408">Iron</keyword>
<keyword id="KW-0411">Iron-sulfur</keyword>
<keyword id="KW-0479">Metal-binding</keyword>
<keyword id="KW-0934">Plastid</keyword>
<keyword id="KW-1185">Reference proteome</keyword>
<keyword id="KW-0809">Transit peptide</keyword>
<keyword id="KW-0813">Transport</keyword>
<evidence type="ECO:0000250" key="1"/>
<evidence type="ECO:0000255" key="2">
    <source>
        <dbReference type="PROSITE-ProRule" id="PRU00465"/>
    </source>
</evidence>
<evidence type="ECO:0000269" key="3">
    <source>
    </source>
</evidence>
<evidence type="ECO:0000305" key="4"/>
<evidence type="ECO:0007829" key="5">
    <source>
        <dbReference type="PDB" id="1A70"/>
    </source>
</evidence>